<evidence type="ECO:0000250" key="1"/>
<evidence type="ECO:0000255" key="2"/>
<evidence type="ECO:0000256" key="3">
    <source>
        <dbReference type="SAM" id="MobiDB-lite"/>
    </source>
</evidence>
<evidence type="ECO:0000305" key="4"/>
<comment type="function">
    <text>Precursor of the egg-yolk proteins that are sources of nutrients during early development of oviparous organisms.</text>
</comment>
<comment type="function">
    <text>Phosvitin is believed to be of importance in sequestering calcium, iron and other cations for the developing embryo.</text>
</comment>
<comment type="tissue specificity">
    <text>Produced by the liver, secreted into the blood and then sequestered by receptor mediated endocytosis into growing oocytes, where it is generally cleaved, giving rise to the respective yolk components.</text>
</comment>
<comment type="induction">
    <text>By steroids (estrogen).</text>
</comment>
<comment type="PTM">
    <text>Phosvitin, an egg yolk storage protein, is one of the most highly phosphorylated (10%) proteins in nature.</text>
</comment>
<comment type="PTM">
    <text>Cathepsin D is responsible for intraoocytic processing of vitellogenin.</text>
</comment>
<comment type="PTM">
    <text>May contain intrachain disulfide bonds.</text>
</comment>
<reference key="1">
    <citation type="journal article" date="1989" name="Mol. Cell. Biol.">
        <title>The major and minor chicken vitellogenin genes are each adjacent to partially deleted pseudogene copies of the other.</title>
        <authorList>
            <person name="Silva R."/>
            <person name="Fischer A.H."/>
            <person name="Burch J.B.E."/>
        </authorList>
    </citation>
    <scope>NUCLEOTIDE SEQUENCE [GENOMIC DNA] OF 1-71</scope>
</reference>
<reference key="2">
    <citation type="journal article" date="1989" name="Biochemistry">
        <title>Rudimentary phosvitin domain in a minor chicken vitellogenin gene.</title>
        <authorList>
            <person name="Byrne B.M."/>
            <person name="de Jong H."/>
            <person name="Fouchier R.A.M."/>
            <person name="Williams D.L."/>
            <person name="Gruber M."/>
            <person name="Ab G."/>
        </authorList>
    </citation>
    <scope>NUCLEOTIDE SEQUENCE [GENOMIC DNA] OF 72-347</scope>
    <source>
        <tissue>Liver</tissue>
    </source>
</reference>
<organism>
    <name type="scientific">Gallus gallus</name>
    <name type="common">Chicken</name>
    <dbReference type="NCBI Taxonomy" id="9031"/>
    <lineage>
        <taxon>Eukaryota</taxon>
        <taxon>Metazoa</taxon>
        <taxon>Chordata</taxon>
        <taxon>Craniata</taxon>
        <taxon>Vertebrata</taxon>
        <taxon>Euteleostomi</taxon>
        <taxon>Archelosauria</taxon>
        <taxon>Archosauria</taxon>
        <taxon>Dinosauria</taxon>
        <taxon>Saurischia</taxon>
        <taxon>Theropoda</taxon>
        <taxon>Coelurosauria</taxon>
        <taxon>Aves</taxon>
        <taxon>Neognathae</taxon>
        <taxon>Galloanserae</taxon>
        <taxon>Galliformes</taxon>
        <taxon>Phasianidae</taxon>
        <taxon>Phasianinae</taxon>
        <taxon>Gallus</taxon>
    </lineage>
</organism>
<feature type="signal peptide" evidence="2">
    <location>
        <begin position="1"/>
        <end position="15"/>
    </location>
</feature>
<feature type="chain" id="PRO_0000041562" description="Vitellogenin-3">
    <location>
        <begin position="16"/>
        <end position="347" status="greater than"/>
    </location>
</feature>
<feature type="chain" id="PRO_0000041563" description="Phosvitin" evidence="1">
    <location>
        <begin position="98"/>
        <end position="191"/>
    </location>
</feature>
<feature type="region of interest" description="Disordered" evidence="3">
    <location>
        <begin position="104"/>
        <end position="174"/>
    </location>
</feature>
<feature type="region of interest" description="Disordered" evidence="3">
    <location>
        <begin position="200"/>
        <end position="234"/>
    </location>
</feature>
<feature type="compositionally biased region" description="Low complexity" evidence="3">
    <location>
        <begin position="104"/>
        <end position="118"/>
    </location>
</feature>
<feature type="compositionally biased region" description="Basic and acidic residues" evidence="3">
    <location>
        <begin position="124"/>
        <end position="133"/>
    </location>
</feature>
<feature type="compositionally biased region" description="Low complexity" evidence="3">
    <location>
        <begin position="144"/>
        <end position="163"/>
    </location>
</feature>
<feature type="compositionally biased region" description="Basic and acidic residues" evidence="3">
    <location>
        <begin position="164"/>
        <end position="174"/>
    </location>
</feature>
<feature type="compositionally biased region" description="Low complexity" evidence="3">
    <location>
        <begin position="209"/>
        <end position="219"/>
    </location>
</feature>
<feature type="glycosylation site" description="N-linked (GlcNAc...) asparagine" evidence="2">
    <location>
        <position position="80"/>
    </location>
</feature>
<feature type="glycosylation site" description="N-linked (GlcNAc...) asparagine" evidence="2">
    <location>
        <position position="208"/>
    </location>
</feature>
<feature type="non-consecutive residues" evidence="4">
    <location>
        <begin position="71"/>
        <end position="72"/>
    </location>
</feature>
<feature type="non-terminal residue">
    <location>
        <position position="347"/>
    </location>
</feature>
<protein>
    <recommendedName>
        <fullName>Vitellogenin-3</fullName>
    </recommendedName>
    <alternativeName>
        <fullName>Minor vitellogenin</fullName>
    </alternativeName>
    <alternativeName>
        <fullName>VYGIII</fullName>
    </alternativeName>
    <alternativeName>
        <fullName>Vitellogenin III</fullName>
    </alternativeName>
    <component>
        <recommendedName>
            <fullName>Phosvitin</fullName>
            <shortName>PV</shortName>
        </recommendedName>
    </component>
</protein>
<name>VIT3_CHICK</name>
<accession>Q91025</accession>
<accession>Q91028</accession>
<keyword id="KW-1015">Disulfide bond</keyword>
<keyword id="KW-0325">Glycoprotein</keyword>
<keyword id="KW-0597">Phosphoprotein</keyword>
<keyword id="KW-1185">Reference proteome</keyword>
<keyword id="KW-0732">Signal</keyword>
<keyword id="KW-0758">Storage protein</keyword>
<dbReference type="EMBL" id="L36662">
    <property type="protein sequence ID" value="AAA21878.1"/>
    <property type="molecule type" value="Genomic_DNA"/>
</dbReference>
<dbReference type="EMBL" id="M28125">
    <property type="protein sequence ID" value="AAA21878.1"/>
    <property type="status" value="JOINED"/>
    <property type="molecule type" value="Genomic_DNA"/>
</dbReference>
<dbReference type="EMBL" id="L36661">
    <property type="protein sequence ID" value="AAA21878.1"/>
    <property type="status" value="JOINED"/>
    <property type="molecule type" value="Genomic_DNA"/>
</dbReference>
<dbReference type="EMBL" id="M25483">
    <property type="protein sequence ID" value="AAA49143.1"/>
    <property type="molecule type" value="Genomic_DNA"/>
</dbReference>
<dbReference type="PIR" id="A31864">
    <property type="entry name" value="A31864"/>
</dbReference>
<dbReference type="PIR" id="I50439">
    <property type="entry name" value="I50439"/>
</dbReference>
<dbReference type="SMR" id="Q91025"/>
<dbReference type="FunCoup" id="Q91025">
    <property type="interactions" value="3"/>
</dbReference>
<dbReference type="STRING" id="9031.ENSGALP00000068631"/>
<dbReference type="GlyCosmos" id="Q91025">
    <property type="glycosylation" value="2 sites, No reported glycans"/>
</dbReference>
<dbReference type="GlyGen" id="Q91025">
    <property type="glycosylation" value="2 sites"/>
</dbReference>
<dbReference type="PaxDb" id="9031-ENSGALP00000002886"/>
<dbReference type="VEuPathDB" id="HostDB:geneid_424534"/>
<dbReference type="eggNOG" id="KOG4338">
    <property type="taxonomic scope" value="Eukaryota"/>
</dbReference>
<dbReference type="InParanoid" id="Q91025"/>
<dbReference type="OrthoDB" id="5956066at2759"/>
<dbReference type="Proteomes" id="UP000000539">
    <property type="component" value="Unassembled WGS sequence"/>
</dbReference>
<dbReference type="GO" id="GO:0005319">
    <property type="term" value="F:lipid transporter activity"/>
    <property type="evidence" value="ECO:0007669"/>
    <property type="project" value="InterPro"/>
</dbReference>
<dbReference type="GO" id="GO:0045735">
    <property type="term" value="F:nutrient reservoir activity"/>
    <property type="evidence" value="ECO:0007669"/>
    <property type="project" value="UniProtKB-KW"/>
</dbReference>
<dbReference type="Gene3D" id="2.30.230.10">
    <property type="entry name" value="Lipovitellin, beta-sheet shell regions, chain A"/>
    <property type="match status" value="1"/>
</dbReference>
<dbReference type="Gene3D" id="2.20.90.10">
    <property type="entry name" value="Vitellinogen, beta-sheet shell domain"/>
    <property type="match status" value="1"/>
</dbReference>
<dbReference type="InterPro" id="IPR015819">
    <property type="entry name" value="Lipid_transp_b-sht_shell"/>
</dbReference>
<dbReference type="InterPro" id="IPR015816">
    <property type="entry name" value="Vitellinogen_b-sht_N"/>
</dbReference>
<dbReference type="InterPro" id="IPR015258">
    <property type="entry name" value="Vitellinogen_b-sht_shell"/>
</dbReference>
<dbReference type="InterPro" id="IPR037088">
    <property type="entry name" value="Vitellinogen_b-sht_shell_sf"/>
</dbReference>
<dbReference type="InterPro" id="IPR050733">
    <property type="entry name" value="Vitellogenin/Apolipophorin"/>
</dbReference>
<dbReference type="InterPro" id="IPR001747">
    <property type="entry name" value="Vitellogenin_N"/>
</dbReference>
<dbReference type="PANTHER" id="PTHR23345:SF15">
    <property type="entry name" value="VITELLOGENIN 1-RELATED"/>
    <property type="match status" value="1"/>
</dbReference>
<dbReference type="PANTHER" id="PTHR23345">
    <property type="entry name" value="VITELLOGENIN-RELATED"/>
    <property type="match status" value="1"/>
</dbReference>
<dbReference type="Pfam" id="PF09175">
    <property type="entry name" value="Vit_b-sht_shell"/>
    <property type="match status" value="1"/>
</dbReference>
<dbReference type="Pfam" id="PF01347">
    <property type="entry name" value="Vitellogenin_N"/>
    <property type="match status" value="1"/>
</dbReference>
<dbReference type="SMART" id="SM01170">
    <property type="entry name" value="DUF1944"/>
    <property type="match status" value="1"/>
</dbReference>
<dbReference type="SUPFAM" id="SSF56968">
    <property type="entry name" value="Lipovitellin-phosvitin complex, beta-sheet shell regions"/>
    <property type="match status" value="2"/>
</dbReference>
<sequence length="347" mass="38151">MRGFILALVLALVGAQKHDLEPVFSTGKTYLYDYKGLILHGLPGKGLAAAGLKLTCRLEISRVSRSDHLLQIENVFKVANKTRHHKKWIHSRVKAAVTDLWEEPSATPLSSSSSTDSSAEGEEPGNKRDKDEIWQFGKKYGADSSSSSSSSSTGSGSSKTCSSSREDSSRDKHCSVDSEYFNQQADLPIYQFWFKPADEQDPRRKVQNSSISSSSSSSSDEGISTPVSQPMFLGDSKPPVLAAVLRAIRRNEQPTGYQLVLYTDRQASRLRVQVFVSSITESDRWKLCADASVVNSHKASGTLKWGKDCQDYQVATQIATGQFAAHPAIQVKLEWSEVPSSVRKTAR</sequence>
<proteinExistence type="evidence at transcript level"/>
<gene>
    <name type="primary">VTG3</name>
    <name type="synonym">VTGIII</name>
</gene>